<comment type="function">
    <text evidence="1">Catalyzes the attachment of threonine to tRNA(Thr) in a two-step reaction: L-threonine is first activated by ATP to form Thr-AMP and then transferred to the acceptor end of tRNA(Thr). Also edits incorrectly charged L-seryl-tRNA(Thr).</text>
</comment>
<comment type="catalytic activity">
    <reaction evidence="1">
        <text>tRNA(Thr) + L-threonine + ATP = L-threonyl-tRNA(Thr) + AMP + diphosphate + H(+)</text>
        <dbReference type="Rhea" id="RHEA:24624"/>
        <dbReference type="Rhea" id="RHEA-COMP:9670"/>
        <dbReference type="Rhea" id="RHEA-COMP:9704"/>
        <dbReference type="ChEBI" id="CHEBI:15378"/>
        <dbReference type="ChEBI" id="CHEBI:30616"/>
        <dbReference type="ChEBI" id="CHEBI:33019"/>
        <dbReference type="ChEBI" id="CHEBI:57926"/>
        <dbReference type="ChEBI" id="CHEBI:78442"/>
        <dbReference type="ChEBI" id="CHEBI:78534"/>
        <dbReference type="ChEBI" id="CHEBI:456215"/>
        <dbReference type="EC" id="6.1.1.3"/>
    </reaction>
</comment>
<comment type="cofactor">
    <cofactor evidence="1">
        <name>Zn(2+)</name>
        <dbReference type="ChEBI" id="CHEBI:29105"/>
    </cofactor>
    <text evidence="1">Binds 1 zinc ion per subunit.</text>
</comment>
<comment type="subunit">
    <text evidence="1">Homodimer.</text>
</comment>
<comment type="subcellular location">
    <subcellularLocation>
        <location evidence="1">Cytoplasm</location>
    </subcellularLocation>
</comment>
<comment type="similarity">
    <text evidence="1">Belongs to the class-II aminoacyl-tRNA synthetase family.</text>
</comment>
<name>SYT_POLAQ</name>
<proteinExistence type="inferred from homology"/>
<protein>
    <recommendedName>
        <fullName evidence="1">Threonine--tRNA ligase</fullName>
        <ecNumber evidence="1">6.1.1.3</ecNumber>
    </recommendedName>
    <alternativeName>
        <fullName evidence="1">Threonyl-tRNA synthetase</fullName>
        <shortName evidence="1">ThrRS</shortName>
    </alternativeName>
</protein>
<gene>
    <name evidence="1" type="primary">thrS</name>
    <name type="ordered locus">Pnuc_0829</name>
</gene>
<accession>A4SX33</accession>
<keyword id="KW-0030">Aminoacyl-tRNA synthetase</keyword>
<keyword id="KW-0067">ATP-binding</keyword>
<keyword id="KW-0963">Cytoplasm</keyword>
<keyword id="KW-0436">Ligase</keyword>
<keyword id="KW-0479">Metal-binding</keyword>
<keyword id="KW-0547">Nucleotide-binding</keyword>
<keyword id="KW-0648">Protein biosynthesis</keyword>
<keyword id="KW-1185">Reference proteome</keyword>
<keyword id="KW-0694">RNA-binding</keyword>
<keyword id="KW-0820">tRNA-binding</keyword>
<keyword id="KW-0862">Zinc</keyword>
<dbReference type="EC" id="6.1.1.3" evidence="1"/>
<dbReference type="EMBL" id="CP000655">
    <property type="protein sequence ID" value="ABP34047.1"/>
    <property type="molecule type" value="Genomic_DNA"/>
</dbReference>
<dbReference type="RefSeq" id="WP_011902672.1">
    <property type="nucleotide sequence ID" value="NC_009379.1"/>
</dbReference>
<dbReference type="SMR" id="A4SX33"/>
<dbReference type="GeneID" id="31481191"/>
<dbReference type="KEGG" id="pnu:Pnuc_0829"/>
<dbReference type="eggNOG" id="COG0441">
    <property type="taxonomic scope" value="Bacteria"/>
</dbReference>
<dbReference type="HOGENOM" id="CLU_008554_0_1_4"/>
<dbReference type="Proteomes" id="UP000000231">
    <property type="component" value="Chromosome"/>
</dbReference>
<dbReference type="GO" id="GO:0005829">
    <property type="term" value="C:cytosol"/>
    <property type="evidence" value="ECO:0007669"/>
    <property type="project" value="TreeGrafter"/>
</dbReference>
<dbReference type="GO" id="GO:0005524">
    <property type="term" value="F:ATP binding"/>
    <property type="evidence" value="ECO:0007669"/>
    <property type="project" value="UniProtKB-UniRule"/>
</dbReference>
<dbReference type="GO" id="GO:0046872">
    <property type="term" value="F:metal ion binding"/>
    <property type="evidence" value="ECO:0007669"/>
    <property type="project" value="UniProtKB-KW"/>
</dbReference>
<dbReference type="GO" id="GO:0004829">
    <property type="term" value="F:threonine-tRNA ligase activity"/>
    <property type="evidence" value="ECO:0007669"/>
    <property type="project" value="UniProtKB-UniRule"/>
</dbReference>
<dbReference type="GO" id="GO:0000049">
    <property type="term" value="F:tRNA binding"/>
    <property type="evidence" value="ECO:0007669"/>
    <property type="project" value="UniProtKB-KW"/>
</dbReference>
<dbReference type="GO" id="GO:0006435">
    <property type="term" value="P:threonyl-tRNA aminoacylation"/>
    <property type="evidence" value="ECO:0007669"/>
    <property type="project" value="UniProtKB-UniRule"/>
</dbReference>
<dbReference type="CDD" id="cd01667">
    <property type="entry name" value="TGS_ThrRS"/>
    <property type="match status" value="1"/>
</dbReference>
<dbReference type="CDD" id="cd00860">
    <property type="entry name" value="ThrRS_anticodon"/>
    <property type="match status" value="1"/>
</dbReference>
<dbReference type="CDD" id="cd00771">
    <property type="entry name" value="ThrRS_core"/>
    <property type="match status" value="1"/>
</dbReference>
<dbReference type="FunFam" id="3.10.20.30:FF:000005">
    <property type="entry name" value="Threonine--tRNA ligase"/>
    <property type="match status" value="1"/>
</dbReference>
<dbReference type="FunFam" id="3.30.54.20:FF:000002">
    <property type="entry name" value="Threonine--tRNA ligase"/>
    <property type="match status" value="1"/>
</dbReference>
<dbReference type="FunFam" id="3.30.930.10:FF:000002">
    <property type="entry name" value="Threonine--tRNA ligase"/>
    <property type="match status" value="1"/>
</dbReference>
<dbReference type="FunFam" id="3.40.50.800:FF:000001">
    <property type="entry name" value="Threonine--tRNA ligase"/>
    <property type="match status" value="1"/>
</dbReference>
<dbReference type="FunFam" id="3.30.980.10:FF:000005">
    <property type="entry name" value="Threonyl-tRNA synthetase, mitochondrial"/>
    <property type="match status" value="1"/>
</dbReference>
<dbReference type="Gene3D" id="3.10.20.30">
    <property type="match status" value="1"/>
</dbReference>
<dbReference type="Gene3D" id="3.30.54.20">
    <property type="match status" value="1"/>
</dbReference>
<dbReference type="Gene3D" id="3.40.50.800">
    <property type="entry name" value="Anticodon-binding domain"/>
    <property type="match status" value="1"/>
</dbReference>
<dbReference type="Gene3D" id="3.30.930.10">
    <property type="entry name" value="Bira Bifunctional Protein, Domain 2"/>
    <property type="match status" value="1"/>
</dbReference>
<dbReference type="Gene3D" id="3.30.980.10">
    <property type="entry name" value="Threonyl-trna Synthetase, Chain A, domain 2"/>
    <property type="match status" value="1"/>
</dbReference>
<dbReference type="HAMAP" id="MF_00184">
    <property type="entry name" value="Thr_tRNA_synth"/>
    <property type="match status" value="1"/>
</dbReference>
<dbReference type="InterPro" id="IPR002314">
    <property type="entry name" value="aa-tRNA-synt_IIb"/>
</dbReference>
<dbReference type="InterPro" id="IPR006195">
    <property type="entry name" value="aa-tRNA-synth_II"/>
</dbReference>
<dbReference type="InterPro" id="IPR045864">
    <property type="entry name" value="aa-tRNA-synth_II/BPL/LPL"/>
</dbReference>
<dbReference type="InterPro" id="IPR004154">
    <property type="entry name" value="Anticodon-bd"/>
</dbReference>
<dbReference type="InterPro" id="IPR036621">
    <property type="entry name" value="Anticodon-bd_dom_sf"/>
</dbReference>
<dbReference type="InterPro" id="IPR012675">
    <property type="entry name" value="Beta-grasp_dom_sf"/>
</dbReference>
<dbReference type="InterPro" id="IPR004095">
    <property type="entry name" value="TGS"/>
</dbReference>
<dbReference type="InterPro" id="IPR012676">
    <property type="entry name" value="TGS-like"/>
</dbReference>
<dbReference type="InterPro" id="IPR002320">
    <property type="entry name" value="Thr-tRNA-ligase_IIa"/>
</dbReference>
<dbReference type="InterPro" id="IPR018163">
    <property type="entry name" value="Thr/Ala-tRNA-synth_IIc_edit"/>
</dbReference>
<dbReference type="InterPro" id="IPR047246">
    <property type="entry name" value="ThrRS_anticodon"/>
</dbReference>
<dbReference type="InterPro" id="IPR033728">
    <property type="entry name" value="ThrRS_core"/>
</dbReference>
<dbReference type="InterPro" id="IPR012947">
    <property type="entry name" value="tRNA_SAD"/>
</dbReference>
<dbReference type="NCBIfam" id="TIGR00418">
    <property type="entry name" value="thrS"/>
    <property type="match status" value="1"/>
</dbReference>
<dbReference type="PANTHER" id="PTHR11451:SF44">
    <property type="entry name" value="THREONINE--TRNA LIGASE, CHLOROPLASTIC_MITOCHONDRIAL 2"/>
    <property type="match status" value="1"/>
</dbReference>
<dbReference type="PANTHER" id="PTHR11451">
    <property type="entry name" value="THREONINE-TRNA LIGASE"/>
    <property type="match status" value="1"/>
</dbReference>
<dbReference type="Pfam" id="PF03129">
    <property type="entry name" value="HGTP_anticodon"/>
    <property type="match status" value="1"/>
</dbReference>
<dbReference type="Pfam" id="PF02824">
    <property type="entry name" value="TGS"/>
    <property type="match status" value="1"/>
</dbReference>
<dbReference type="Pfam" id="PF00587">
    <property type="entry name" value="tRNA-synt_2b"/>
    <property type="match status" value="1"/>
</dbReference>
<dbReference type="Pfam" id="PF07973">
    <property type="entry name" value="tRNA_SAD"/>
    <property type="match status" value="1"/>
</dbReference>
<dbReference type="PRINTS" id="PR01047">
    <property type="entry name" value="TRNASYNTHTHR"/>
</dbReference>
<dbReference type="SMART" id="SM00863">
    <property type="entry name" value="tRNA_SAD"/>
    <property type="match status" value="1"/>
</dbReference>
<dbReference type="SUPFAM" id="SSF52954">
    <property type="entry name" value="Class II aaRS ABD-related"/>
    <property type="match status" value="1"/>
</dbReference>
<dbReference type="SUPFAM" id="SSF55681">
    <property type="entry name" value="Class II aaRS and biotin synthetases"/>
    <property type="match status" value="1"/>
</dbReference>
<dbReference type="SUPFAM" id="SSF81271">
    <property type="entry name" value="TGS-like"/>
    <property type="match status" value="1"/>
</dbReference>
<dbReference type="SUPFAM" id="SSF55186">
    <property type="entry name" value="ThrRS/AlaRS common domain"/>
    <property type="match status" value="1"/>
</dbReference>
<dbReference type="PROSITE" id="PS50862">
    <property type="entry name" value="AA_TRNA_LIGASE_II"/>
    <property type="match status" value="1"/>
</dbReference>
<dbReference type="PROSITE" id="PS51880">
    <property type="entry name" value="TGS"/>
    <property type="match status" value="1"/>
</dbReference>
<sequence>MPVVTLPDGSKREYEAPVRVADVAQSIGSGLAKAALGGIVDGQMVDTSFVIDKDSHLAIITDKSPEALEIVRHSTAHLLAYAVKELFPEAQVTIGPVIENGFYYDFSYHRPFTPDDLVALEKKMTELAKKDEPVVRTVMPRDEAVEFFKQQGENYKAELIASIPQGEDVSLYAEGKFTDLCRGPHVPSTGKLKVFKLMKLAGAYWRGDSKNEMLQRIYGTAWLRKEDQDAYLHMLEESEKRDHRRLGKQLDLFHFQEEAPGLIFWHPKGWSIWQEVEQYMRRVYQNEGYQEVKAPQILDRGLWEKSGHWDNYKENMFTTESENRAYALKPMNCPGHVQIYNSGLHSYRELPLRFGEFGQCHRNEPSGALHGLMRVRGFTQDDGHIFCTEDQIQSEVAAFDKAVRAVYQDFGFTEVAVKLALRPAKRVGDDAIWDKAEDALRGALKASGQEWEELPGEGAFYGPKIEYHLKDSIGRTWQCGTIQVDFSMPARLGAEYVAEDNSRKTPVMLHRAIVGSLERFIGILIENHAGNMPVWLAPTQAVVLNISGNSAAYAQKVQQSLKKQGFRVESDLRNEKITYKIREHALQKIPFLLVVGDKESESNTVAVRARGGVDLGVMPLDAFVARLQQDISQKVGPEPS</sequence>
<reference key="1">
    <citation type="journal article" date="2012" name="Stand. Genomic Sci.">
        <title>Complete genome sequence of Polynucleobacter necessarius subsp. asymbioticus type strain (QLW-P1DMWA-1(T)).</title>
        <authorList>
            <person name="Meincke L."/>
            <person name="Copeland A."/>
            <person name="Lapidus A."/>
            <person name="Lucas S."/>
            <person name="Berry K.W."/>
            <person name="Del Rio T.G."/>
            <person name="Hammon N."/>
            <person name="Dalin E."/>
            <person name="Tice H."/>
            <person name="Pitluck S."/>
            <person name="Richardson P."/>
            <person name="Bruce D."/>
            <person name="Goodwin L."/>
            <person name="Han C."/>
            <person name="Tapia R."/>
            <person name="Detter J.C."/>
            <person name="Schmutz J."/>
            <person name="Brettin T."/>
            <person name="Larimer F."/>
            <person name="Land M."/>
            <person name="Hauser L."/>
            <person name="Kyrpides N.C."/>
            <person name="Ivanova N."/>
            <person name="Goker M."/>
            <person name="Woyke T."/>
            <person name="Wu Q.L."/>
            <person name="Pockl M."/>
            <person name="Hahn M.W."/>
            <person name="Klenk H.P."/>
        </authorList>
    </citation>
    <scope>NUCLEOTIDE SEQUENCE [LARGE SCALE GENOMIC DNA]</scope>
    <source>
        <strain>DSM 18221 / CIP 109841 / QLW-P1DMWA-1</strain>
    </source>
</reference>
<organism>
    <name type="scientific">Polynucleobacter asymbioticus (strain DSM 18221 / CIP 109841 / QLW-P1DMWA-1)</name>
    <name type="common">Polynucleobacter necessarius subsp. asymbioticus</name>
    <dbReference type="NCBI Taxonomy" id="312153"/>
    <lineage>
        <taxon>Bacteria</taxon>
        <taxon>Pseudomonadati</taxon>
        <taxon>Pseudomonadota</taxon>
        <taxon>Betaproteobacteria</taxon>
        <taxon>Burkholderiales</taxon>
        <taxon>Burkholderiaceae</taxon>
        <taxon>Polynucleobacter</taxon>
    </lineage>
</organism>
<evidence type="ECO:0000255" key="1">
    <source>
        <dbReference type="HAMAP-Rule" id="MF_00184"/>
    </source>
</evidence>
<evidence type="ECO:0000255" key="2">
    <source>
        <dbReference type="PROSITE-ProRule" id="PRU01228"/>
    </source>
</evidence>
<feature type="chain" id="PRO_1000077368" description="Threonine--tRNA ligase">
    <location>
        <begin position="1"/>
        <end position="640"/>
    </location>
</feature>
<feature type="domain" description="TGS" evidence="2">
    <location>
        <begin position="1"/>
        <end position="61"/>
    </location>
</feature>
<feature type="region of interest" description="Catalytic" evidence="1">
    <location>
        <begin position="242"/>
        <end position="533"/>
    </location>
</feature>
<feature type="binding site" evidence="1">
    <location>
        <position position="333"/>
    </location>
    <ligand>
        <name>Zn(2+)</name>
        <dbReference type="ChEBI" id="CHEBI:29105"/>
    </ligand>
</feature>
<feature type="binding site" evidence="1">
    <location>
        <position position="384"/>
    </location>
    <ligand>
        <name>Zn(2+)</name>
        <dbReference type="ChEBI" id="CHEBI:29105"/>
    </ligand>
</feature>
<feature type="binding site" evidence="1">
    <location>
        <position position="510"/>
    </location>
    <ligand>
        <name>Zn(2+)</name>
        <dbReference type="ChEBI" id="CHEBI:29105"/>
    </ligand>
</feature>